<comment type="function">
    <text evidence="1">Catalyzes the irreversible transfer of a propylamine group from the amino donor S-adenosylmethioninamine (decarboxy-AdoMet) to putrescine (1,4-diaminobutane) to yield spermidine.</text>
</comment>
<comment type="catalytic activity">
    <reaction evidence="1">
        <text>S-adenosyl 3-(methylsulfanyl)propylamine + putrescine = S-methyl-5'-thioadenosine + spermidine + H(+)</text>
        <dbReference type="Rhea" id="RHEA:12721"/>
        <dbReference type="ChEBI" id="CHEBI:15378"/>
        <dbReference type="ChEBI" id="CHEBI:17509"/>
        <dbReference type="ChEBI" id="CHEBI:57443"/>
        <dbReference type="ChEBI" id="CHEBI:57834"/>
        <dbReference type="ChEBI" id="CHEBI:326268"/>
        <dbReference type="EC" id="2.5.1.16"/>
    </reaction>
</comment>
<comment type="pathway">
    <text evidence="1">Amine and polyamine biosynthesis; spermidine biosynthesis; spermidine from putrescine: step 1/1.</text>
</comment>
<comment type="subunit">
    <text evidence="1">Homodimer or homotetramer.</text>
</comment>
<comment type="subcellular location">
    <subcellularLocation>
        <location evidence="1">Cytoplasm</location>
    </subcellularLocation>
</comment>
<comment type="similarity">
    <text evidence="1">Belongs to the spermidine/spermine synthase family.</text>
</comment>
<protein>
    <recommendedName>
        <fullName evidence="1">Polyamine aminopropyltransferase</fullName>
    </recommendedName>
    <alternativeName>
        <fullName evidence="1">Putrescine aminopropyltransferase</fullName>
        <shortName evidence="1">PAPT</shortName>
    </alternativeName>
    <alternativeName>
        <fullName evidence="1">Spermidine synthase</fullName>
        <shortName evidence="1">SPDS</shortName>
        <shortName evidence="1">SPDSY</shortName>
        <ecNumber evidence="1">2.5.1.16</ecNumber>
    </alternativeName>
</protein>
<name>SPEE_SYNJA</name>
<proteinExistence type="inferred from homology"/>
<feature type="chain" id="PRO_1000012023" description="Polyamine aminopropyltransferase">
    <location>
        <begin position="1"/>
        <end position="312"/>
    </location>
</feature>
<feature type="domain" description="PABS" evidence="1">
    <location>
        <begin position="7"/>
        <end position="247"/>
    </location>
</feature>
<feature type="active site" description="Proton acceptor" evidence="1">
    <location>
        <position position="165"/>
    </location>
</feature>
<feature type="binding site" evidence="1">
    <location>
        <position position="36"/>
    </location>
    <ligand>
        <name>S-methyl-5'-thioadenosine</name>
        <dbReference type="ChEBI" id="CHEBI:17509"/>
    </ligand>
</feature>
<feature type="binding site" evidence="1">
    <location>
        <position position="67"/>
    </location>
    <ligand>
        <name>spermidine</name>
        <dbReference type="ChEBI" id="CHEBI:57834"/>
    </ligand>
</feature>
<feature type="binding site" evidence="1">
    <location>
        <position position="95"/>
    </location>
    <ligand>
        <name>spermidine</name>
        <dbReference type="ChEBI" id="CHEBI:57834"/>
    </ligand>
</feature>
<feature type="binding site" evidence="1">
    <location>
        <position position="115"/>
    </location>
    <ligand>
        <name>S-methyl-5'-thioadenosine</name>
        <dbReference type="ChEBI" id="CHEBI:17509"/>
    </ligand>
</feature>
<feature type="binding site" evidence="1">
    <location>
        <begin position="147"/>
        <end position="148"/>
    </location>
    <ligand>
        <name>S-methyl-5'-thioadenosine</name>
        <dbReference type="ChEBI" id="CHEBI:17509"/>
    </ligand>
</feature>
<feature type="binding site" evidence="1">
    <location>
        <position position="174"/>
    </location>
    <ligand>
        <name>S-methyl-5'-thioadenosine</name>
        <dbReference type="ChEBI" id="CHEBI:17509"/>
    </ligand>
</feature>
<keyword id="KW-0963">Cytoplasm</keyword>
<keyword id="KW-0620">Polyamine biosynthesis</keyword>
<keyword id="KW-0745">Spermidine biosynthesis</keyword>
<keyword id="KW-0808">Transferase</keyword>
<evidence type="ECO:0000255" key="1">
    <source>
        <dbReference type="HAMAP-Rule" id="MF_00198"/>
    </source>
</evidence>
<accession>Q2JQS1</accession>
<dbReference type="EC" id="2.5.1.16" evidence="1"/>
<dbReference type="EMBL" id="CP000239">
    <property type="protein sequence ID" value="ABC98791.1"/>
    <property type="molecule type" value="Genomic_DNA"/>
</dbReference>
<dbReference type="RefSeq" id="WP_011429478.1">
    <property type="nucleotide sequence ID" value="NC_007775.1"/>
</dbReference>
<dbReference type="SMR" id="Q2JQS1"/>
<dbReference type="STRING" id="321327.CYA_0575"/>
<dbReference type="KEGG" id="cya:CYA_0575"/>
<dbReference type="eggNOG" id="COG0421">
    <property type="taxonomic scope" value="Bacteria"/>
</dbReference>
<dbReference type="HOGENOM" id="CLU_048199_0_1_3"/>
<dbReference type="OrthoDB" id="9793120at2"/>
<dbReference type="UniPathway" id="UPA00248">
    <property type="reaction ID" value="UER00314"/>
</dbReference>
<dbReference type="Proteomes" id="UP000008818">
    <property type="component" value="Chromosome"/>
</dbReference>
<dbReference type="GO" id="GO:0005737">
    <property type="term" value="C:cytoplasm"/>
    <property type="evidence" value="ECO:0007669"/>
    <property type="project" value="UniProtKB-SubCell"/>
</dbReference>
<dbReference type="GO" id="GO:0004766">
    <property type="term" value="F:spermidine synthase activity"/>
    <property type="evidence" value="ECO:0007669"/>
    <property type="project" value="UniProtKB-UniRule"/>
</dbReference>
<dbReference type="GO" id="GO:0010487">
    <property type="term" value="F:thermospermine synthase activity"/>
    <property type="evidence" value="ECO:0007669"/>
    <property type="project" value="UniProtKB-ARBA"/>
</dbReference>
<dbReference type="GO" id="GO:0008295">
    <property type="term" value="P:spermidine biosynthetic process"/>
    <property type="evidence" value="ECO:0007669"/>
    <property type="project" value="UniProtKB-UniRule"/>
</dbReference>
<dbReference type="CDD" id="cd02440">
    <property type="entry name" value="AdoMet_MTases"/>
    <property type="match status" value="1"/>
</dbReference>
<dbReference type="FunFam" id="3.40.50.150:FF:000088">
    <property type="entry name" value="Polyamine aminopropyltransferase"/>
    <property type="match status" value="1"/>
</dbReference>
<dbReference type="Gene3D" id="2.30.140.10">
    <property type="entry name" value="Spermidine synthase, tetramerisation domain"/>
    <property type="match status" value="1"/>
</dbReference>
<dbReference type="Gene3D" id="3.40.50.150">
    <property type="entry name" value="Vaccinia Virus protein VP39"/>
    <property type="match status" value="1"/>
</dbReference>
<dbReference type="HAMAP" id="MF_00198">
    <property type="entry name" value="Spermidine_synth"/>
    <property type="match status" value="1"/>
</dbReference>
<dbReference type="InterPro" id="IPR030374">
    <property type="entry name" value="PABS"/>
</dbReference>
<dbReference type="InterPro" id="IPR029063">
    <property type="entry name" value="SAM-dependent_MTases_sf"/>
</dbReference>
<dbReference type="InterPro" id="IPR001045">
    <property type="entry name" value="Spermi_synthase"/>
</dbReference>
<dbReference type="InterPro" id="IPR035246">
    <property type="entry name" value="Spermidine_synt_N"/>
</dbReference>
<dbReference type="InterPro" id="IPR037163">
    <property type="entry name" value="Spermidine_synt_N_sf"/>
</dbReference>
<dbReference type="PANTHER" id="PTHR43317">
    <property type="entry name" value="THERMOSPERMINE SYNTHASE ACAULIS5"/>
    <property type="match status" value="1"/>
</dbReference>
<dbReference type="PANTHER" id="PTHR43317:SF1">
    <property type="entry name" value="THERMOSPERMINE SYNTHASE ACAULIS5"/>
    <property type="match status" value="1"/>
</dbReference>
<dbReference type="Pfam" id="PF17284">
    <property type="entry name" value="Spermine_synt_N"/>
    <property type="match status" value="1"/>
</dbReference>
<dbReference type="Pfam" id="PF01564">
    <property type="entry name" value="Spermine_synth"/>
    <property type="match status" value="1"/>
</dbReference>
<dbReference type="SUPFAM" id="SSF53335">
    <property type="entry name" value="S-adenosyl-L-methionine-dependent methyltransferases"/>
    <property type="match status" value="1"/>
</dbReference>
<dbReference type="PROSITE" id="PS51006">
    <property type="entry name" value="PABS_2"/>
    <property type="match status" value="1"/>
</dbReference>
<organism>
    <name type="scientific">Synechococcus sp. (strain JA-3-3Ab)</name>
    <name type="common">Cyanobacteria bacterium Yellowstone A-Prime</name>
    <dbReference type="NCBI Taxonomy" id="321327"/>
    <lineage>
        <taxon>Bacteria</taxon>
        <taxon>Bacillati</taxon>
        <taxon>Cyanobacteriota</taxon>
        <taxon>Cyanophyceae</taxon>
        <taxon>Synechococcales</taxon>
        <taxon>Synechococcaceae</taxon>
        <taxon>Synechococcus</taxon>
    </lineage>
</organism>
<sequence>MNTPKSFFWAQEYFTPWDYTARAITRILAYRKTRFQEMLIAETGAYGKGLMLDGHWQSTTADEFLYHEALVHPALVQVVQAGGIPRRVLILGGAEGATLREVLRWRSVEQVVMVDIDGEVVEACREHLPEMHQGSFADPRAEVVIADALDFLGQTEPIWDAILSDLSDPVEAGPAYRLFTQEFFRQVRSKLQTAGAFVIQAGPTGPVELWQHTRIVHTLKTVFAAVQPYAIYAPTYGGPLGFALAAQDPISSRPEPEQVDQILAQHLDPDRGALRFIDGITLLGLYQVPAHLRRAIAAETTVYTLANPPQVE</sequence>
<gene>
    <name evidence="1" type="primary">speE</name>
    <name type="ordered locus">CYA_0575</name>
</gene>
<reference key="1">
    <citation type="journal article" date="2007" name="ISME J.">
        <title>Population level functional diversity in a microbial community revealed by comparative genomic and metagenomic analyses.</title>
        <authorList>
            <person name="Bhaya D."/>
            <person name="Grossman A.R."/>
            <person name="Steunou A.-S."/>
            <person name="Khuri N."/>
            <person name="Cohan F.M."/>
            <person name="Hamamura N."/>
            <person name="Melendrez M.C."/>
            <person name="Bateson M.M."/>
            <person name="Ward D.M."/>
            <person name="Heidelberg J.F."/>
        </authorList>
    </citation>
    <scope>NUCLEOTIDE SEQUENCE [LARGE SCALE GENOMIC DNA]</scope>
    <source>
        <strain>JA-3-3Ab</strain>
    </source>
</reference>